<sequence>MLNFNIFLVGPMGSGKTTIGRYLARITGKNFYDSDREIESRTGVSIPVIFEIEGESGFRQRECKIIAELVQLNNIVLATGGGAVLAAENRRELSQRGIVVYLYAPPKQLYRRTSHDNNRPLLRTGNPLERLKCLLKERDPLYREVADVIIKTGKQPVKAVANEVLRQLRQYKGGAPQRKSFVHVKSNKGA</sequence>
<comment type="function">
    <text evidence="1">Catalyzes the specific phosphorylation of the 3-hydroxyl group of shikimic acid using ATP as a cosubstrate.</text>
</comment>
<comment type="catalytic activity">
    <reaction evidence="1">
        <text>shikimate + ATP = 3-phosphoshikimate + ADP + H(+)</text>
        <dbReference type="Rhea" id="RHEA:13121"/>
        <dbReference type="ChEBI" id="CHEBI:15378"/>
        <dbReference type="ChEBI" id="CHEBI:30616"/>
        <dbReference type="ChEBI" id="CHEBI:36208"/>
        <dbReference type="ChEBI" id="CHEBI:145989"/>
        <dbReference type="ChEBI" id="CHEBI:456216"/>
        <dbReference type="EC" id="2.7.1.71"/>
    </reaction>
</comment>
<comment type="cofactor">
    <cofactor evidence="1">
        <name>Mg(2+)</name>
        <dbReference type="ChEBI" id="CHEBI:18420"/>
    </cofactor>
    <text evidence="1">Binds 1 Mg(2+) ion per subunit.</text>
</comment>
<comment type="pathway">
    <text evidence="1">Metabolic intermediate biosynthesis; chorismate biosynthesis; chorismate from D-erythrose 4-phosphate and phosphoenolpyruvate: step 5/7.</text>
</comment>
<comment type="subunit">
    <text evidence="1">Monomer.</text>
</comment>
<comment type="subcellular location">
    <subcellularLocation>
        <location evidence="1">Cytoplasm</location>
    </subcellularLocation>
</comment>
<comment type="similarity">
    <text evidence="1">Belongs to the shikimate kinase family.</text>
</comment>
<feature type="chain" id="PRO_0000237899" description="Shikimate kinase">
    <location>
        <begin position="1"/>
        <end position="190"/>
    </location>
</feature>
<feature type="binding site" evidence="1">
    <location>
        <begin position="13"/>
        <end position="18"/>
    </location>
    <ligand>
        <name>ATP</name>
        <dbReference type="ChEBI" id="CHEBI:30616"/>
    </ligand>
</feature>
<feature type="binding site" evidence="1">
    <location>
        <position position="17"/>
    </location>
    <ligand>
        <name>Mg(2+)</name>
        <dbReference type="ChEBI" id="CHEBI:18420"/>
    </ligand>
</feature>
<feature type="binding site" evidence="1">
    <location>
        <position position="35"/>
    </location>
    <ligand>
        <name>substrate</name>
    </ligand>
</feature>
<feature type="binding site" evidence="1">
    <location>
        <position position="59"/>
    </location>
    <ligand>
        <name>substrate</name>
    </ligand>
</feature>
<feature type="binding site" evidence="1">
    <location>
        <position position="81"/>
    </location>
    <ligand>
        <name>substrate</name>
    </ligand>
</feature>
<feature type="binding site" evidence="1">
    <location>
        <position position="119"/>
    </location>
    <ligand>
        <name>ATP</name>
        <dbReference type="ChEBI" id="CHEBI:30616"/>
    </ligand>
</feature>
<feature type="binding site" evidence="1">
    <location>
        <position position="138"/>
    </location>
    <ligand>
        <name>substrate</name>
    </ligand>
</feature>
<feature type="binding site" evidence="1">
    <location>
        <position position="155"/>
    </location>
    <ligand>
        <name>ATP</name>
        <dbReference type="ChEBI" id="CHEBI:30616"/>
    </ligand>
</feature>
<dbReference type="EC" id="2.7.1.71" evidence="1"/>
<dbReference type="EMBL" id="CP000127">
    <property type="protein sequence ID" value="ABA56782.1"/>
    <property type="molecule type" value="Genomic_DNA"/>
</dbReference>
<dbReference type="RefSeq" id="WP_002814231.1">
    <property type="nucleotide sequence ID" value="NC_007484.1"/>
</dbReference>
<dbReference type="SMR" id="Q3JEG4"/>
<dbReference type="FunCoup" id="Q3JEG4">
    <property type="interactions" value="551"/>
</dbReference>
<dbReference type="STRING" id="323261.Noc_0252"/>
<dbReference type="KEGG" id="noc:Noc_0252"/>
<dbReference type="eggNOG" id="COG0703">
    <property type="taxonomic scope" value="Bacteria"/>
</dbReference>
<dbReference type="HOGENOM" id="CLU_057607_2_2_6"/>
<dbReference type="InParanoid" id="Q3JEG4"/>
<dbReference type="UniPathway" id="UPA00053">
    <property type="reaction ID" value="UER00088"/>
</dbReference>
<dbReference type="Proteomes" id="UP000006838">
    <property type="component" value="Chromosome"/>
</dbReference>
<dbReference type="GO" id="GO:0005829">
    <property type="term" value="C:cytosol"/>
    <property type="evidence" value="ECO:0007669"/>
    <property type="project" value="TreeGrafter"/>
</dbReference>
<dbReference type="GO" id="GO:0005524">
    <property type="term" value="F:ATP binding"/>
    <property type="evidence" value="ECO:0007669"/>
    <property type="project" value="UniProtKB-UniRule"/>
</dbReference>
<dbReference type="GO" id="GO:0000287">
    <property type="term" value="F:magnesium ion binding"/>
    <property type="evidence" value="ECO:0007669"/>
    <property type="project" value="UniProtKB-UniRule"/>
</dbReference>
<dbReference type="GO" id="GO:0004765">
    <property type="term" value="F:shikimate kinase activity"/>
    <property type="evidence" value="ECO:0007669"/>
    <property type="project" value="UniProtKB-UniRule"/>
</dbReference>
<dbReference type="GO" id="GO:0008652">
    <property type="term" value="P:amino acid biosynthetic process"/>
    <property type="evidence" value="ECO:0007669"/>
    <property type="project" value="UniProtKB-KW"/>
</dbReference>
<dbReference type="GO" id="GO:0009073">
    <property type="term" value="P:aromatic amino acid family biosynthetic process"/>
    <property type="evidence" value="ECO:0007669"/>
    <property type="project" value="UniProtKB-KW"/>
</dbReference>
<dbReference type="GO" id="GO:0009423">
    <property type="term" value="P:chorismate biosynthetic process"/>
    <property type="evidence" value="ECO:0007669"/>
    <property type="project" value="UniProtKB-UniRule"/>
</dbReference>
<dbReference type="CDD" id="cd00464">
    <property type="entry name" value="SK"/>
    <property type="match status" value="1"/>
</dbReference>
<dbReference type="Gene3D" id="3.40.50.300">
    <property type="entry name" value="P-loop containing nucleotide triphosphate hydrolases"/>
    <property type="match status" value="1"/>
</dbReference>
<dbReference type="HAMAP" id="MF_00109">
    <property type="entry name" value="Shikimate_kinase"/>
    <property type="match status" value="1"/>
</dbReference>
<dbReference type="InterPro" id="IPR027417">
    <property type="entry name" value="P-loop_NTPase"/>
</dbReference>
<dbReference type="InterPro" id="IPR031322">
    <property type="entry name" value="Shikimate/glucono_kinase"/>
</dbReference>
<dbReference type="InterPro" id="IPR000623">
    <property type="entry name" value="Shikimate_kinase/TSH1"/>
</dbReference>
<dbReference type="InterPro" id="IPR023000">
    <property type="entry name" value="Shikimate_kinase_CS"/>
</dbReference>
<dbReference type="NCBIfam" id="NF003456">
    <property type="entry name" value="PRK05057.1"/>
    <property type="match status" value="1"/>
</dbReference>
<dbReference type="PANTHER" id="PTHR21087">
    <property type="entry name" value="SHIKIMATE KINASE"/>
    <property type="match status" value="1"/>
</dbReference>
<dbReference type="PANTHER" id="PTHR21087:SF16">
    <property type="entry name" value="SHIKIMATE KINASE 1, CHLOROPLASTIC"/>
    <property type="match status" value="1"/>
</dbReference>
<dbReference type="Pfam" id="PF01202">
    <property type="entry name" value="SKI"/>
    <property type="match status" value="1"/>
</dbReference>
<dbReference type="PRINTS" id="PR01100">
    <property type="entry name" value="SHIKIMTKNASE"/>
</dbReference>
<dbReference type="SUPFAM" id="SSF52540">
    <property type="entry name" value="P-loop containing nucleoside triphosphate hydrolases"/>
    <property type="match status" value="1"/>
</dbReference>
<dbReference type="PROSITE" id="PS01128">
    <property type="entry name" value="SHIKIMATE_KINASE"/>
    <property type="match status" value="1"/>
</dbReference>
<protein>
    <recommendedName>
        <fullName evidence="1">Shikimate kinase</fullName>
        <shortName evidence="1">SK</shortName>
        <ecNumber evidence="1">2.7.1.71</ecNumber>
    </recommendedName>
</protein>
<evidence type="ECO:0000255" key="1">
    <source>
        <dbReference type="HAMAP-Rule" id="MF_00109"/>
    </source>
</evidence>
<gene>
    <name evidence="1" type="primary">aroK</name>
    <name type="ordered locus">Noc_0252</name>
</gene>
<reference key="1">
    <citation type="journal article" date="2006" name="Appl. Environ. Microbiol.">
        <title>Complete genome sequence of the marine, chemolithoautotrophic, ammonia-oxidizing bacterium Nitrosococcus oceani ATCC 19707.</title>
        <authorList>
            <person name="Klotz M.G."/>
            <person name="Arp D.J."/>
            <person name="Chain P.S.G."/>
            <person name="El-Sheikh A.F."/>
            <person name="Hauser L.J."/>
            <person name="Hommes N.G."/>
            <person name="Larimer F.W."/>
            <person name="Malfatti S.A."/>
            <person name="Norton J.M."/>
            <person name="Poret-Peterson A.T."/>
            <person name="Vergez L.M."/>
            <person name="Ward B.B."/>
        </authorList>
    </citation>
    <scope>NUCLEOTIDE SEQUENCE [LARGE SCALE GENOMIC DNA]</scope>
    <source>
        <strain>ATCC 19707 / BCRC 17464 / JCM 30415 / NCIMB 11848 / C-107</strain>
    </source>
</reference>
<keyword id="KW-0028">Amino-acid biosynthesis</keyword>
<keyword id="KW-0057">Aromatic amino acid biosynthesis</keyword>
<keyword id="KW-0067">ATP-binding</keyword>
<keyword id="KW-0963">Cytoplasm</keyword>
<keyword id="KW-0418">Kinase</keyword>
<keyword id="KW-0460">Magnesium</keyword>
<keyword id="KW-0479">Metal-binding</keyword>
<keyword id="KW-0547">Nucleotide-binding</keyword>
<keyword id="KW-1185">Reference proteome</keyword>
<keyword id="KW-0808">Transferase</keyword>
<proteinExistence type="inferred from homology"/>
<name>AROK_NITOC</name>
<accession>Q3JEG4</accession>
<organism>
    <name type="scientific">Nitrosococcus oceani (strain ATCC 19707 / BCRC 17464 / JCM 30415 / NCIMB 11848 / C-107)</name>
    <dbReference type="NCBI Taxonomy" id="323261"/>
    <lineage>
        <taxon>Bacteria</taxon>
        <taxon>Pseudomonadati</taxon>
        <taxon>Pseudomonadota</taxon>
        <taxon>Gammaproteobacteria</taxon>
        <taxon>Chromatiales</taxon>
        <taxon>Chromatiaceae</taxon>
        <taxon>Nitrosococcus</taxon>
    </lineage>
</organism>